<sequence length="379" mass="43187">MTSYNPASPDFPFTLGIEEEYQVVDPQTRELRSYITQILDRGKMILREQIKPELHQSMVEVGTHPCRTIQEARAEVVRLRSIIAGLARQHGLTIISAGTHPISSWMSQEITPFERYKGVVEEMQQLALQLLIFGMHVHVGMPDDEVAIELMNVARYFLPHILALSTSSPFWMGRNTGFKSYRSALFANFPRTGIPPSFHSAAEFHNYVNLLIRTNCIDDAKKIYWDLRPHPYFGTLEFRVCDAATRVDECIALAALMQALTVKLHLMFSENTTFRVYRRAVIMENKWRAQRWGLDGKLIDFGKRAEVDARALMYELVAFVDEVLDELGSRQEVEYLLKIAEGGSSADRQLAVFRETNDLNAVVDNLIVETLEGVPAYQA</sequence>
<accession>A5UWI8</accession>
<name>GCS2_ROSS1</name>
<organism>
    <name type="scientific">Roseiflexus sp. (strain RS-1)</name>
    <dbReference type="NCBI Taxonomy" id="357808"/>
    <lineage>
        <taxon>Bacteria</taxon>
        <taxon>Bacillati</taxon>
        <taxon>Chloroflexota</taxon>
        <taxon>Chloroflexia</taxon>
        <taxon>Chloroflexales</taxon>
        <taxon>Roseiflexineae</taxon>
        <taxon>Roseiflexaceae</taxon>
        <taxon>Roseiflexus</taxon>
    </lineage>
</organism>
<reference key="1">
    <citation type="submission" date="2007-04" db="EMBL/GenBank/DDBJ databases">
        <title>Complete sequence of Roseiflexus sp. RS-1.</title>
        <authorList>
            <consortium name="US DOE Joint Genome Institute"/>
            <person name="Copeland A."/>
            <person name="Lucas S."/>
            <person name="Lapidus A."/>
            <person name="Barry K."/>
            <person name="Detter J.C."/>
            <person name="Glavina del Rio T."/>
            <person name="Hammon N."/>
            <person name="Israni S."/>
            <person name="Dalin E."/>
            <person name="Tice H."/>
            <person name="Pitluck S."/>
            <person name="Chertkov O."/>
            <person name="Brettin T."/>
            <person name="Bruce D."/>
            <person name="Han C."/>
            <person name="Schmutz J."/>
            <person name="Larimer F."/>
            <person name="Land M."/>
            <person name="Hauser L."/>
            <person name="Kyrpides N."/>
            <person name="Mikhailova N."/>
            <person name="Bryant D.A."/>
            <person name="Richardson P."/>
        </authorList>
    </citation>
    <scope>NUCLEOTIDE SEQUENCE [LARGE SCALE GENOMIC DNA]</scope>
    <source>
        <strain>RS-1</strain>
    </source>
</reference>
<dbReference type="EC" id="6.3.2.2" evidence="1"/>
<dbReference type="EMBL" id="CP000686">
    <property type="protein sequence ID" value="ABQ90991.1"/>
    <property type="molecule type" value="Genomic_DNA"/>
</dbReference>
<dbReference type="RefSeq" id="WP_011957335.1">
    <property type="nucleotide sequence ID" value="NC_009523.1"/>
</dbReference>
<dbReference type="SMR" id="A5UWI8"/>
<dbReference type="STRING" id="357808.RoseRS_2615"/>
<dbReference type="KEGG" id="rrs:RoseRS_2615"/>
<dbReference type="eggNOG" id="COG2170">
    <property type="taxonomic scope" value="Bacteria"/>
</dbReference>
<dbReference type="HOGENOM" id="CLU_044848_1_0_0"/>
<dbReference type="OrthoDB" id="9769628at2"/>
<dbReference type="Proteomes" id="UP000006554">
    <property type="component" value="Chromosome"/>
</dbReference>
<dbReference type="GO" id="GO:0005524">
    <property type="term" value="F:ATP binding"/>
    <property type="evidence" value="ECO:0007669"/>
    <property type="project" value="UniProtKB-KW"/>
</dbReference>
<dbReference type="GO" id="GO:0004357">
    <property type="term" value="F:glutamate-cysteine ligase activity"/>
    <property type="evidence" value="ECO:0007669"/>
    <property type="project" value="UniProtKB-EC"/>
</dbReference>
<dbReference type="GO" id="GO:0042398">
    <property type="term" value="P:modified amino acid biosynthetic process"/>
    <property type="evidence" value="ECO:0007669"/>
    <property type="project" value="InterPro"/>
</dbReference>
<dbReference type="Gene3D" id="3.30.590.20">
    <property type="match status" value="1"/>
</dbReference>
<dbReference type="HAMAP" id="MF_01609">
    <property type="entry name" value="Glu_cys_ligase_2"/>
    <property type="match status" value="1"/>
</dbReference>
<dbReference type="InterPro" id="IPR050141">
    <property type="entry name" value="GCL_type2/YbdK_subfam"/>
</dbReference>
<dbReference type="InterPro" id="IPR006336">
    <property type="entry name" value="GCS2"/>
</dbReference>
<dbReference type="InterPro" id="IPR014746">
    <property type="entry name" value="Gln_synth/guanido_kin_cat_dom"/>
</dbReference>
<dbReference type="InterPro" id="IPR011793">
    <property type="entry name" value="YbdK"/>
</dbReference>
<dbReference type="NCBIfam" id="TIGR02050">
    <property type="entry name" value="gshA_cyan_rel"/>
    <property type="match status" value="1"/>
</dbReference>
<dbReference type="NCBIfam" id="NF010039">
    <property type="entry name" value="PRK13515.1"/>
    <property type="match status" value="1"/>
</dbReference>
<dbReference type="PANTHER" id="PTHR36510">
    <property type="entry name" value="GLUTAMATE--CYSTEINE LIGASE 2-RELATED"/>
    <property type="match status" value="1"/>
</dbReference>
<dbReference type="PANTHER" id="PTHR36510:SF1">
    <property type="entry name" value="GLUTAMATE--CYSTEINE LIGASE 2-RELATED"/>
    <property type="match status" value="1"/>
</dbReference>
<dbReference type="Pfam" id="PF04107">
    <property type="entry name" value="GCS2"/>
    <property type="match status" value="1"/>
</dbReference>
<dbReference type="SUPFAM" id="SSF55931">
    <property type="entry name" value="Glutamine synthetase/guanido kinase"/>
    <property type="match status" value="1"/>
</dbReference>
<gene>
    <name type="ordered locus">RoseRS_2615</name>
</gene>
<keyword id="KW-0067">ATP-binding</keyword>
<keyword id="KW-0436">Ligase</keyword>
<keyword id="KW-0547">Nucleotide-binding</keyword>
<proteinExistence type="inferred from homology"/>
<evidence type="ECO:0000255" key="1">
    <source>
        <dbReference type="HAMAP-Rule" id="MF_01609"/>
    </source>
</evidence>
<comment type="function">
    <text evidence="1">ATP-dependent carboxylate-amine ligase which exhibits weak glutamate--cysteine ligase activity.</text>
</comment>
<comment type="catalytic activity">
    <reaction evidence="1">
        <text>L-cysteine + L-glutamate + ATP = gamma-L-glutamyl-L-cysteine + ADP + phosphate + H(+)</text>
        <dbReference type="Rhea" id="RHEA:13285"/>
        <dbReference type="ChEBI" id="CHEBI:15378"/>
        <dbReference type="ChEBI" id="CHEBI:29985"/>
        <dbReference type="ChEBI" id="CHEBI:30616"/>
        <dbReference type="ChEBI" id="CHEBI:35235"/>
        <dbReference type="ChEBI" id="CHEBI:43474"/>
        <dbReference type="ChEBI" id="CHEBI:58173"/>
        <dbReference type="ChEBI" id="CHEBI:456216"/>
        <dbReference type="EC" id="6.3.2.2"/>
    </reaction>
</comment>
<comment type="similarity">
    <text evidence="1">Belongs to the glutamate--cysteine ligase type 2 family. YbdK subfamily.</text>
</comment>
<feature type="chain" id="PRO_0000337702" description="Putative glutamate--cysteine ligase 2">
    <location>
        <begin position="1"/>
        <end position="379"/>
    </location>
</feature>
<protein>
    <recommendedName>
        <fullName evidence="1">Putative glutamate--cysteine ligase 2</fullName>
        <ecNumber evidence="1">6.3.2.2</ecNumber>
    </recommendedName>
    <alternativeName>
        <fullName evidence="1">Gamma-glutamylcysteine synthetase 2</fullName>
        <shortName evidence="1">GCS 2</shortName>
        <shortName evidence="1">Gamma-GCS 2</shortName>
    </alternativeName>
</protein>